<accession>P22387</accession>
<accession>P70203</accession>
<accession>P97338</accession>
<evidence type="ECO:0000250" key="1">
    <source>
        <dbReference type="UniProtKB" id="P05305"/>
    </source>
</evidence>
<evidence type="ECO:0000250" key="2">
    <source>
        <dbReference type="UniProtKB" id="P09558"/>
    </source>
</evidence>
<evidence type="ECO:0000250" key="3">
    <source>
        <dbReference type="UniProtKB" id="P22388"/>
    </source>
</evidence>
<evidence type="ECO:0000255" key="4"/>
<evidence type="ECO:0000269" key="5">
    <source>
    </source>
</evidence>
<evidence type="ECO:0000269" key="6">
    <source>
    </source>
</evidence>
<evidence type="ECO:0000269" key="7">
    <source>
    </source>
</evidence>
<evidence type="ECO:0000269" key="8">
    <source>
    </source>
</evidence>
<evidence type="ECO:0000305" key="9"/>
<dbReference type="EMBL" id="U35233">
    <property type="protein sequence ID" value="AAA97608.1"/>
    <property type="molecule type" value="mRNA"/>
</dbReference>
<dbReference type="EMBL" id="D43775">
    <property type="protein sequence ID" value="BAA07830.1"/>
    <property type="molecule type" value="mRNA"/>
</dbReference>
<dbReference type="EMBL" id="D70842">
    <property type="protein sequence ID" value="BAA11109.1"/>
    <property type="molecule type" value="Genomic_DNA"/>
</dbReference>
<dbReference type="EMBL" id="BC029547">
    <property type="protein sequence ID" value="AAH29547.1"/>
    <property type="molecule type" value="mRNA"/>
</dbReference>
<dbReference type="EMBL" id="U07982">
    <property type="protein sequence ID" value="AAA74439.1"/>
    <property type="status" value="ALT_SEQ"/>
    <property type="molecule type" value="Genomic_DNA"/>
</dbReference>
<dbReference type="EMBL" id="S66650">
    <property type="protein sequence ID" value="AAP13983.1"/>
    <property type="molecule type" value="mRNA"/>
</dbReference>
<dbReference type="EMBL" id="M26497">
    <property type="status" value="NOT_ANNOTATED_CDS"/>
    <property type="molecule type" value="Genomic_DNA"/>
</dbReference>
<dbReference type="CCDS" id="CCDS26474.1"/>
<dbReference type="PIR" id="S63538">
    <property type="entry name" value="S63538"/>
</dbReference>
<dbReference type="RefSeq" id="NP_034234.1">
    <property type="nucleotide sequence ID" value="NM_010104.4"/>
</dbReference>
<dbReference type="BMRB" id="P22387"/>
<dbReference type="FunCoup" id="P22387">
    <property type="interactions" value="809"/>
</dbReference>
<dbReference type="STRING" id="10090.ENSMUSP00000021796"/>
<dbReference type="GlyGen" id="P22387">
    <property type="glycosylation" value="1 site"/>
</dbReference>
<dbReference type="PhosphoSitePlus" id="P22387"/>
<dbReference type="PaxDb" id="10090-ENSMUSP00000021796"/>
<dbReference type="ProteomicsDB" id="277682"/>
<dbReference type="Antibodypedia" id="10136">
    <property type="antibodies" value="760 antibodies from 38 providers"/>
</dbReference>
<dbReference type="DNASU" id="13614"/>
<dbReference type="Ensembl" id="ENSMUST00000021796.9">
    <property type="protein sequence ID" value="ENSMUSP00000021796.8"/>
    <property type="gene ID" value="ENSMUSG00000021367.9"/>
</dbReference>
<dbReference type="GeneID" id="13614"/>
<dbReference type="KEGG" id="mmu:13614"/>
<dbReference type="UCSC" id="uc007qfl.2">
    <property type="organism name" value="mouse"/>
</dbReference>
<dbReference type="AGR" id="MGI:95283"/>
<dbReference type="CTD" id="1906"/>
<dbReference type="MGI" id="MGI:95283">
    <property type="gene designation" value="Edn1"/>
</dbReference>
<dbReference type="VEuPathDB" id="HostDB:ENSMUSG00000021367"/>
<dbReference type="eggNOG" id="ENOG502S1NV">
    <property type="taxonomic scope" value="Eukaryota"/>
</dbReference>
<dbReference type="GeneTree" id="ENSGT00950000183053"/>
<dbReference type="HOGENOM" id="CLU_090013_1_0_1"/>
<dbReference type="InParanoid" id="P22387"/>
<dbReference type="OMA" id="TDHRNRC"/>
<dbReference type="OrthoDB" id="8873756at2759"/>
<dbReference type="PhylomeDB" id="P22387"/>
<dbReference type="TreeFam" id="TF333184"/>
<dbReference type="Reactome" id="R-MMU-375276">
    <property type="pathway name" value="Peptide ligand-binding receptors"/>
</dbReference>
<dbReference type="Reactome" id="R-MMU-416476">
    <property type="pathway name" value="G alpha (q) signalling events"/>
</dbReference>
<dbReference type="BioGRID-ORCS" id="13614">
    <property type="hits" value="0 hits in 76 CRISPR screens"/>
</dbReference>
<dbReference type="ChiTaRS" id="Edn1">
    <property type="organism name" value="mouse"/>
</dbReference>
<dbReference type="PRO" id="PR:P22387"/>
<dbReference type="Proteomes" id="UP000000589">
    <property type="component" value="Chromosome 13"/>
</dbReference>
<dbReference type="RNAct" id="P22387">
    <property type="molecule type" value="protein"/>
</dbReference>
<dbReference type="Bgee" id="ENSMUSG00000021367">
    <property type="expression patterns" value="Expressed in trunk blood vessel and 201 other cell types or tissues"/>
</dbReference>
<dbReference type="ExpressionAtlas" id="P22387">
    <property type="expression patterns" value="baseline and differential"/>
</dbReference>
<dbReference type="GO" id="GO:0045178">
    <property type="term" value="C:basal part of cell"/>
    <property type="evidence" value="ECO:0007669"/>
    <property type="project" value="Ensembl"/>
</dbReference>
<dbReference type="GO" id="GO:0005615">
    <property type="term" value="C:extracellular space"/>
    <property type="evidence" value="ECO:0000314"/>
    <property type="project" value="MGI"/>
</dbReference>
<dbReference type="GO" id="GO:0048237">
    <property type="term" value="C:rough endoplasmic reticulum lumen"/>
    <property type="evidence" value="ECO:0007669"/>
    <property type="project" value="Ensembl"/>
</dbReference>
<dbReference type="GO" id="GO:0033093">
    <property type="term" value="C:Weibel-Palade body"/>
    <property type="evidence" value="ECO:0007669"/>
    <property type="project" value="Ensembl"/>
</dbReference>
<dbReference type="GO" id="GO:0005125">
    <property type="term" value="F:cytokine activity"/>
    <property type="evidence" value="ECO:0007669"/>
    <property type="project" value="Ensembl"/>
</dbReference>
<dbReference type="GO" id="GO:0031707">
    <property type="term" value="F:endothelin A receptor binding"/>
    <property type="evidence" value="ECO:0000353"/>
    <property type="project" value="MGI"/>
</dbReference>
<dbReference type="GO" id="GO:0031708">
    <property type="term" value="F:endothelin B receptor binding"/>
    <property type="evidence" value="ECO:0007669"/>
    <property type="project" value="Ensembl"/>
</dbReference>
<dbReference type="GO" id="GO:0005179">
    <property type="term" value="F:hormone activity"/>
    <property type="evidence" value="ECO:0007669"/>
    <property type="project" value="Ensembl"/>
</dbReference>
<dbReference type="GO" id="GO:0048018">
    <property type="term" value="F:receptor ligand activity"/>
    <property type="evidence" value="ECO:0000314"/>
    <property type="project" value="MGI"/>
</dbReference>
<dbReference type="GO" id="GO:0005102">
    <property type="term" value="F:signaling receptor binding"/>
    <property type="evidence" value="ECO:0000314"/>
    <property type="project" value="MGI"/>
</dbReference>
<dbReference type="GO" id="GO:0007193">
    <property type="term" value="P:adenylate cyclase-inhibiting G protein-coupled receptor signaling pathway"/>
    <property type="evidence" value="ECO:0000314"/>
    <property type="project" value="MGI"/>
</dbReference>
<dbReference type="GO" id="GO:0014824">
    <property type="term" value="P:artery smooth muscle contraction"/>
    <property type="evidence" value="ECO:0007669"/>
    <property type="project" value="Ensembl"/>
</dbReference>
<dbReference type="GO" id="GO:0048675">
    <property type="term" value="P:axon extension"/>
    <property type="evidence" value="ECO:0000314"/>
    <property type="project" value="MGI"/>
</dbReference>
<dbReference type="GO" id="GO:0007411">
    <property type="term" value="P:axon guidance"/>
    <property type="evidence" value="ECO:0000315"/>
    <property type="project" value="MGI"/>
</dbReference>
<dbReference type="GO" id="GO:0060385">
    <property type="term" value="P:axonogenesis involved in innervation"/>
    <property type="evidence" value="ECO:0000315"/>
    <property type="project" value="MGI"/>
</dbReference>
<dbReference type="GO" id="GO:0048514">
    <property type="term" value="P:blood vessel morphogenesis"/>
    <property type="evidence" value="ECO:0000315"/>
    <property type="project" value="MGI"/>
</dbReference>
<dbReference type="GO" id="GO:0007589">
    <property type="term" value="P:body fluid secretion"/>
    <property type="evidence" value="ECO:0000315"/>
    <property type="project" value="MGI"/>
</dbReference>
<dbReference type="GO" id="GO:0001569">
    <property type="term" value="P:branching involved in blood vessel morphogenesis"/>
    <property type="evidence" value="ECO:0000315"/>
    <property type="project" value="MGI"/>
</dbReference>
<dbReference type="GO" id="GO:0070588">
    <property type="term" value="P:calcium ion transmembrane transport"/>
    <property type="evidence" value="ECO:0000314"/>
    <property type="project" value="MGI"/>
</dbReference>
<dbReference type="GO" id="GO:0019722">
    <property type="term" value="P:calcium-mediated signaling"/>
    <property type="evidence" value="ECO:0007669"/>
    <property type="project" value="Ensembl"/>
</dbReference>
<dbReference type="GO" id="GO:0141156">
    <property type="term" value="P:cAMP/PKA signal transduction"/>
    <property type="evidence" value="ECO:0000266"/>
    <property type="project" value="MGI"/>
</dbReference>
<dbReference type="GO" id="GO:0060070">
    <property type="term" value="P:canonical Wnt signaling pathway"/>
    <property type="evidence" value="ECO:0000314"/>
    <property type="project" value="MGI"/>
</dbReference>
<dbReference type="GO" id="GO:0003253">
    <property type="term" value="P:cardiac neural crest cell migration involved in outflow tract morphogenesis"/>
    <property type="evidence" value="ECO:0000314"/>
    <property type="project" value="MGI"/>
</dbReference>
<dbReference type="GO" id="GO:0051216">
    <property type="term" value="P:cartilage development"/>
    <property type="evidence" value="ECO:0000315"/>
    <property type="project" value="MGI"/>
</dbReference>
<dbReference type="GO" id="GO:0071277">
    <property type="term" value="P:cellular response to calcium ion"/>
    <property type="evidence" value="ECO:0007669"/>
    <property type="project" value="Ensembl"/>
</dbReference>
<dbReference type="GO" id="GO:0071398">
    <property type="term" value="P:cellular response to fatty acid"/>
    <property type="evidence" value="ECO:0007669"/>
    <property type="project" value="Ensembl"/>
</dbReference>
<dbReference type="GO" id="GO:0071372">
    <property type="term" value="P:cellular response to follicle-stimulating hormone stimulus"/>
    <property type="evidence" value="ECO:0000314"/>
    <property type="project" value="MGI"/>
</dbReference>
<dbReference type="GO" id="GO:0071385">
    <property type="term" value="P:cellular response to glucocorticoid stimulus"/>
    <property type="evidence" value="ECO:0007669"/>
    <property type="project" value="Ensembl"/>
</dbReference>
<dbReference type="GO" id="GO:0044751">
    <property type="term" value="P:cellular response to human chorionic gonadotropin stimulus"/>
    <property type="evidence" value="ECO:0000314"/>
    <property type="project" value="MGI"/>
</dbReference>
<dbReference type="GO" id="GO:0070301">
    <property type="term" value="P:cellular response to hydrogen peroxide"/>
    <property type="evidence" value="ECO:0000266"/>
    <property type="project" value="MGI"/>
</dbReference>
<dbReference type="GO" id="GO:0071456">
    <property type="term" value="P:cellular response to hypoxia"/>
    <property type="evidence" value="ECO:0007669"/>
    <property type="project" value="Ensembl"/>
</dbReference>
<dbReference type="GO" id="GO:0071347">
    <property type="term" value="P:cellular response to interleukin-1"/>
    <property type="evidence" value="ECO:0007669"/>
    <property type="project" value="Ensembl"/>
</dbReference>
<dbReference type="GO" id="GO:0071373">
    <property type="term" value="P:cellular response to luteinizing hormone stimulus"/>
    <property type="evidence" value="ECO:0000314"/>
    <property type="project" value="MGI"/>
</dbReference>
<dbReference type="GO" id="GO:0071389">
    <property type="term" value="P:cellular response to mineralocorticoid stimulus"/>
    <property type="evidence" value="ECO:0007669"/>
    <property type="project" value="Ensembl"/>
</dbReference>
<dbReference type="GO" id="GO:0097237">
    <property type="term" value="P:cellular response to toxic substance"/>
    <property type="evidence" value="ECO:0000314"/>
    <property type="project" value="MGI"/>
</dbReference>
<dbReference type="GO" id="GO:0071560">
    <property type="term" value="P:cellular response to transforming growth factor beta stimulus"/>
    <property type="evidence" value="ECO:0007669"/>
    <property type="project" value="Ensembl"/>
</dbReference>
<dbReference type="GO" id="GO:0071356">
    <property type="term" value="P:cellular response to tumor necrosis factor"/>
    <property type="evidence" value="ECO:0007669"/>
    <property type="project" value="Ensembl"/>
</dbReference>
<dbReference type="GO" id="GO:0071346">
    <property type="term" value="P:cellular response to type II interferon"/>
    <property type="evidence" value="ECO:0007669"/>
    <property type="project" value="Ensembl"/>
</dbReference>
<dbReference type="GO" id="GO:0071466">
    <property type="term" value="P:cellular response to xenobiotic stimulus"/>
    <property type="evidence" value="ECO:0007669"/>
    <property type="project" value="Ensembl"/>
</dbReference>
<dbReference type="GO" id="GO:0009953">
    <property type="term" value="P:dorsal/ventral pattern formation"/>
    <property type="evidence" value="ECO:0000315"/>
    <property type="project" value="MGI"/>
</dbReference>
<dbReference type="GO" id="GO:0035050">
    <property type="term" value="P:embryonic heart tube development"/>
    <property type="evidence" value="ECO:0000315"/>
    <property type="project" value="MGI"/>
</dbReference>
<dbReference type="GO" id="GO:0086100">
    <property type="term" value="P:endothelin receptor signaling pathway"/>
    <property type="evidence" value="ECO:0000314"/>
    <property type="project" value="MGI"/>
</dbReference>
<dbReference type="GO" id="GO:0086101">
    <property type="term" value="P:endothelin receptor signaling pathway involved in heart process"/>
    <property type="evidence" value="ECO:0000314"/>
    <property type="project" value="MGI"/>
</dbReference>
<dbReference type="GO" id="GO:0042045">
    <property type="term" value="P:epithelial fluid transport"/>
    <property type="evidence" value="ECO:0007669"/>
    <property type="project" value="Ensembl"/>
</dbReference>
<dbReference type="GO" id="GO:0070371">
    <property type="term" value="P:ERK1 and ERK2 cascade"/>
    <property type="evidence" value="ECO:0000314"/>
    <property type="project" value="MGI"/>
</dbReference>
<dbReference type="GO" id="GO:0007186">
    <property type="term" value="P:G protein-coupled receptor signaling pathway"/>
    <property type="evidence" value="ECO:0000304"/>
    <property type="project" value="MGI"/>
</dbReference>
<dbReference type="GO" id="GO:0010467">
    <property type="term" value="P:gene expression"/>
    <property type="evidence" value="ECO:0000314"/>
    <property type="project" value="MGI"/>
</dbReference>
<dbReference type="GO" id="GO:0072011">
    <property type="term" value="P:glomerular endothelium development"/>
    <property type="evidence" value="ECO:0000314"/>
    <property type="project" value="MGI"/>
</dbReference>
<dbReference type="GO" id="GO:0003094">
    <property type="term" value="P:glomerular filtration"/>
    <property type="evidence" value="ECO:0000314"/>
    <property type="project" value="MGI"/>
</dbReference>
<dbReference type="GO" id="GO:0007507">
    <property type="term" value="P:heart development"/>
    <property type="evidence" value="ECO:0000315"/>
    <property type="project" value="MGI"/>
</dbReference>
<dbReference type="GO" id="GO:0003015">
    <property type="term" value="P:heart process"/>
    <property type="evidence" value="ECO:0000315"/>
    <property type="project" value="MGI"/>
</dbReference>
<dbReference type="GO" id="GO:0001821">
    <property type="term" value="P:histamine secretion"/>
    <property type="evidence" value="ECO:0007669"/>
    <property type="project" value="Ensembl"/>
</dbReference>
<dbReference type="GO" id="GO:0001701">
    <property type="term" value="P:in utero embryonic development"/>
    <property type="evidence" value="ECO:0000315"/>
    <property type="project" value="MGI"/>
</dbReference>
<dbReference type="GO" id="GO:0006874">
    <property type="term" value="P:intracellular calcium ion homeostasis"/>
    <property type="evidence" value="ECO:0000314"/>
    <property type="project" value="MGI"/>
</dbReference>
<dbReference type="GO" id="GO:0000165">
    <property type="term" value="P:MAPK cascade"/>
    <property type="evidence" value="ECO:0000314"/>
    <property type="project" value="MGI"/>
</dbReference>
<dbReference type="GO" id="GO:0060137">
    <property type="term" value="P:maternal process involved in parturition"/>
    <property type="evidence" value="ECO:0007669"/>
    <property type="project" value="Ensembl"/>
</dbReference>
<dbReference type="GO" id="GO:1903537">
    <property type="term" value="P:meiotic cell cycle process involved in oocyte maturation"/>
    <property type="evidence" value="ECO:0000314"/>
    <property type="project" value="MGI"/>
</dbReference>
<dbReference type="GO" id="GO:0051899">
    <property type="term" value="P:membrane depolarization"/>
    <property type="evidence" value="ECO:0007669"/>
    <property type="project" value="Ensembl"/>
</dbReference>
<dbReference type="GO" id="GO:0042474">
    <property type="term" value="P:middle ear morphogenesis"/>
    <property type="evidence" value="ECO:0000315"/>
    <property type="project" value="MGI"/>
</dbReference>
<dbReference type="GO" id="GO:0007005">
    <property type="term" value="P:mitochondrion organization"/>
    <property type="evidence" value="ECO:0000314"/>
    <property type="project" value="MGI"/>
</dbReference>
<dbReference type="GO" id="GO:0010629">
    <property type="term" value="P:negative regulation of gene expression"/>
    <property type="evidence" value="ECO:0007669"/>
    <property type="project" value="Ensembl"/>
</dbReference>
<dbReference type="GO" id="GO:0046888">
    <property type="term" value="P:negative regulation of hormone secretion"/>
    <property type="evidence" value="ECO:0007669"/>
    <property type="project" value="Ensembl"/>
</dbReference>
<dbReference type="GO" id="GO:0160195">
    <property type="term" value="P:negative regulation of phospholipase C/protein kinase C signal transduction"/>
    <property type="evidence" value="ECO:0007669"/>
    <property type="project" value="Ensembl"/>
</dbReference>
<dbReference type="GO" id="GO:0051248">
    <property type="term" value="P:negative regulation of protein metabolic process"/>
    <property type="evidence" value="ECO:0007669"/>
    <property type="project" value="Ensembl"/>
</dbReference>
<dbReference type="GO" id="GO:0034392">
    <property type="term" value="P:negative regulation of smooth muscle cell apoptotic process"/>
    <property type="evidence" value="ECO:0007669"/>
    <property type="project" value="Ensembl"/>
</dbReference>
<dbReference type="GO" id="GO:0000122">
    <property type="term" value="P:negative regulation of transcription by RNA polymerase II"/>
    <property type="evidence" value="ECO:0007669"/>
    <property type="project" value="Ensembl"/>
</dbReference>
<dbReference type="GO" id="GO:0014032">
    <property type="term" value="P:neural crest cell development"/>
    <property type="evidence" value="ECO:0000315"/>
    <property type="project" value="MGI"/>
</dbReference>
<dbReference type="GO" id="GO:0014033">
    <property type="term" value="P:neural crest cell differentiation"/>
    <property type="evidence" value="ECO:0000315"/>
    <property type="project" value="MGI"/>
</dbReference>
<dbReference type="GO" id="GO:0014034">
    <property type="term" value="P:neural crest cell fate commitment"/>
    <property type="evidence" value="ECO:0000315"/>
    <property type="project" value="MGI"/>
</dbReference>
<dbReference type="GO" id="GO:0031175">
    <property type="term" value="P:neuron projection development"/>
    <property type="evidence" value="ECO:0000314"/>
    <property type="project" value="MGI"/>
</dbReference>
<dbReference type="GO" id="GO:0030185">
    <property type="term" value="P:nitric oxide transport"/>
    <property type="evidence" value="ECO:0007669"/>
    <property type="project" value="Ensembl"/>
</dbReference>
<dbReference type="GO" id="GO:0003357">
    <property type="term" value="P:noradrenergic neuron differentiation"/>
    <property type="evidence" value="ECO:0000315"/>
    <property type="project" value="MGI"/>
</dbReference>
<dbReference type="GO" id="GO:0030072">
    <property type="term" value="P:peptide hormone secretion"/>
    <property type="evidence" value="ECO:0007669"/>
    <property type="project" value="Ensembl"/>
</dbReference>
<dbReference type="GO" id="GO:0061626">
    <property type="term" value="P:pharyngeal arch artery morphogenesis"/>
    <property type="evidence" value="ECO:0000315"/>
    <property type="project" value="MGI"/>
</dbReference>
<dbReference type="GO" id="GO:0043491">
    <property type="term" value="P:phosphatidylinositol 3-kinase/protein kinase B signal transduction"/>
    <property type="evidence" value="ECO:0007669"/>
    <property type="project" value="Ensembl"/>
</dbReference>
<dbReference type="GO" id="GO:0007200">
    <property type="term" value="P:phospholipase C-activating G protein-coupled receptor signaling pathway"/>
    <property type="evidence" value="ECO:0000314"/>
    <property type="project" value="MGI"/>
</dbReference>
<dbReference type="GO" id="GO:0031583">
    <property type="term" value="P:phospholipase D-activating G protein-coupled receptor signaling pathway"/>
    <property type="evidence" value="ECO:0000314"/>
    <property type="project" value="MGI"/>
</dbReference>
<dbReference type="GO" id="GO:0072112">
    <property type="term" value="P:podocyte differentiation"/>
    <property type="evidence" value="ECO:0000314"/>
    <property type="project" value="MGI"/>
</dbReference>
<dbReference type="GO" id="GO:1905653">
    <property type="term" value="P:positive regulation of artery morphogenesis"/>
    <property type="evidence" value="ECO:0000315"/>
    <property type="project" value="UniProtKB"/>
</dbReference>
<dbReference type="GO" id="GO:0050850">
    <property type="term" value="P:positive regulation of calcium-mediated signaling"/>
    <property type="evidence" value="ECO:0007669"/>
    <property type="project" value="Ensembl"/>
</dbReference>
<dbReference type="GO" id="GO:0043123">
    <property type="term" value="P:positive regulation of canonical NF-kappaB signal transduction"/>
    <property type="evidence" value="ECO:0000314"/>
    <property type="project" value="MGI"/>
</dbReference>
<dbReference type="GO" id="GO:0061051">
    <property type="term" value="P:positive regulation of cell growth involved in cardiac muscle cell development"/>
    <property type="evidence" value="ECO:0007669"/>
    <property type="project" value="Ensembl"/>
</dbReference>
<dbReference type="GO" id="GO:0008284">
    <property type="term" value="P:positive regulation of cell population proliferation"/>
    <property type="evidence" value="ECO:0000314"/>
    <property type="project" value="MGI"/>
</dbReference>
<dbReference type="GO" id="GO:0045793">
    <property type="term" value="P:positive regulation of cell size"/>
    <property type="evidence" value="ECO:0007669"/>
    <property type="project" value="Ensembl"/>
</dbReference>
<dbReference type="GO" id="GO:0070101">
    <property type="term" value="P:positive regulation of chemokine-mediated signaling pathway"/>
    <property type="evidence" value="ECO:0007669"/>
    <property type="project" value="Ensembl"/>
</dbReference>
<dbReference type="GO" id="GO:0007204">
    <property type="term" value="P:positive regulation of cytosolic calcium ion concentration"/>
    <property type="evidence" value="ECO:0007669"/>
    <property type="project" value="Ensembl"/>
</dbReference>
<dbReference type="GO" id="GO:0010460">
    <property type="term" value="P:positive regulation of heart rate"/>
    <property type="evidence" value="ECO:0007669"/>
    <property type="project" value="Ensembl"/>
</dbReference>
<dbReference type="GO" id="GO:0046887">
    <property type="term" value="P:positive regulation of hormone secretion"/>
    <property type="evidence" value="ECO:0007669"/>
    <property type="project" value="Ensembl"/>
</dbReference>
<dbReference type="GO" id="GO:0046330">
    <property type="term" value="P:positive regulation of JNK cascade"/>
    <property type="evidence" value="ECO:0007669"/>
    <property type="project" value="Ensembl"/>
</dbReference>
<dbReference type="GO" id="GO:0045840">
    <property type="term" value="P:positive regulation of mitotic nuclear division"/>
    <property type="evidence" value="ECO:0007669"/>
    <property type="project" value="Ensembl"/>
</dbReference>
<dbReference type="GO" id="GO:0090023">
    <property type="term" value="P:positive regulation of neutrophil chemotaxis"/>
    <property type="evidence" value="ECO:0007669"/>
    <property type="project" value="Ensembl"/>
</dbReference>
<dbReference type="GO" id="GO:1901224">
    <property type="term" value="P:positive regulation of non-canonical NF-kappaB signal transduction"/>
    <property type="evidence" value="ECO:0007669"/>
    <property type="project" value="Ensembl"/>
</dbReference>
<dbReference type="GO" id="GO:0042482">
    <property type="term" value="P:positive regulation of odontogenesis"/>
    <property type="evidence" value="ECO:0007669"/>
    <property type="project" value="Ensembl"/>
</dbReference>
<dbReference type="GO" id="GO:0032308">
    <property type="term" value="P:positive regulation of prostaglandin secretion"/>
    <property type="evidence" value="ECO:0007669"/>
    <property type="project" value="Ensembl"/>
</dbReference>
<dbReference type="GO" id="GO:1900182">
    <property type="term" value="P:positive regulation of protein localization to nucleus"/>
    <property type="evidence" value="ECO:0000315"/>
    <property type="project" value="UniProtKB"/>
</dbReference>
<dbReference type="GO" id="GO:0035815">
    <property type="term" value="P:positive regulation of renal sodium excretion"/>
    <property type="evidence" value="ECO:0000315"/>
    <property type="project" value="MGI"/>
</dbReference>
<dbReference type="GO" id="GO:0060298">
    <property type="term" value="P:positive regulation of sarcomere organization"/>
    <property type="evidence" value="ECO:0007669"/>
    <property type="project" value="Ensembl"/>
</dbReference>
<dbReference type="GO" id="GO:0045987">
    <property type="term" value="P:positive regulation of smooth muscle contraction"/>
    <property type="evidence" value="ECO:0000314"/>
    <property type="project" value="MGI"/>
</dbReference>
<dbReference type="GO" id="GO:0045944">
    <property type="term" value="P:positive regulation of transcription by RNA polymerase II"/>
    <property type="evidence" value="ECO:0007669"/>
    <property type="project" value="Ensembl"/>
</dbReference>
<dbReference type="GO" id="GO:0035810">
    <property type="term" value="P:positive regulation of urine volume"/>
    <property type="evidence" value="ECO:0000315"/>
    <property type="project" value="MGI"/>
</dbReference>
<dbReference type="GO" id="GO:1904707">
    <property type="term" value="P:positive regulation of vascular associated smooth muscle cell proliferation"/>
    <property type="evidence" value="ECO:0007669"/>
    <property type="project" value="Ensembl"/>
</dbReference>
<dbReference type="GO" id="GO:0001516">
    <property type="term" value="P:prostaglandin biosynthetic process"/>
    <property type="evidence" value="ECO:0007669"/>
    <property type="project" value="Ensembl"/>
</dbReference>
<dbReference type="GO" id="GO:0008217">
    <property type="term" value="P:regulation of blood pressure"/>
    <property type="evidence" value="ECO:0000315"/>
    <property type="project" value="MGI"/>
</dbReference>
<dbReference type="GO" id="GO:0010827">
    <property type="term" value="P:regulation of D-glucose transmembrane transport"/>
    <property type="evidence" value="ECO:0000314"/>
    <property type="project" value="MGI"/>
</dbReference>
<dbReference type="GO" id="GO:0006885">
    <property type="term" value="P:regulation of pH"/>
    <property type="evidence" value="ECO:0000314"/>
    <property type="project" value="MGI"/>
</dbReference>
<dbReference type="GO" id="GO:0003100">
    <property type="term" value="P:regulation of systemic arterial blood pressure by endothelin"/>
    <property type="evidence" value="ECO:0007669"/>
    <property type="project" value="Ensembl"/>
</dbReference>
<dbReference type="GO" id="GO:0019229">
    <property type="term" value="P:regulation of vasoconstriction"/>
    <property type="evidence" value="ECO:0007669"/>
    <property type="project" value="InterPro"/>
</dbReference>
<dbReference type="GO" id="GO:0070294">
    <property type="term" value="P:renal sodium ion absorption"/>
    <property type="evidence" value="ECO:0000314"/>
    <property type="project" value="MGI"/>
</dbReference>
<dbReference type="GO" id="GO:0007585">
    <property type="term" value="P:respiratory gaseous exchange by respiratory system"/>
    <property type="evidence" value="ECO:0000315"/>
    <property type="project" value="MGI"/>
</dbReference>
<dbReference type="GO" id="GO:0014823">
    <property type="term" value="P:response to activity"/>
    <property type="evidence" value="ECO:0007669"/>
    <property type="project" value="Ensembl"/>
</dbReference>
<dbReference type="GO" id="GO:0043200">
    <property type="term" value="P:response to amino acid"/>
    <property type="evidence" value="ECO:0007669"/>
    <property type="project" value="Ensembl"/>
</dbReference>
<dbReference type="GO" id="GO:0001975">
    <property type="term" value="P:response to amphetamine"/>
    <property type="evidence" value="ECO:0000315"/>
    <property type="project" value="MGI"/>
</dbReference>
<dbReference type="GO" id="GO:0071548">
    <property type="term" value="P:response to dexamethasone"/>
    <property type="evidence" value="ECO:0007669"/>
    <property type="project" value="Ensembl"/>
</dbReference>
<dbReference type="GO" id="GO:0001666">
    <property type="term" value="P:response to hypoxia"/>
    <property type="evidence" value="ECO:0000315"/>
    <property type="project" value="MGI"/>
</dbReference>
<dbReference type="GO" id="GO:0044321">
    <property type="term" value="P:response to leptin"/>
    <property type="evidence" value="ECO:0007669"/>
    <property type="project" value="Ensembl"/>
</dbReference>
<dbReference type="GO" id="GO:0032496">
    <property type="term" value="P:response to lipopolysaccharide"/>
    <property type="evidence" value="ECO:0007669"/>
    <property type="project" value="Ensembl"/>
</dbReference>
<dbReference type="GO" id="GO:0035994">
    <property type="term" value="P:response to muscle stretch"/>
    <property type="evidence" value="ECO:0007669"/>
    <property type="project" value="Ensembl"/>
</dbReference>
<dbReference type="GO" id="GO:0035094">
    <property type="term" value="P:response to nicotine"/>
    <property type="evidence" value="ECO:0007669"/>
    <property type="project" value="Ensembl"/>
</dbReference>
<dbReference type="GO" id="GO:0010193">
    <property type="term" value="P:response to ozone"/>
    <property type="evidence" value="ECO:0007669"/>
    <property type="project" value="Ensembl"/>
</dbReference>
<dbReference type="GO" id="GO:0034696">
    <property type="term" value="P:response to prostaglandin F"/>
    <property type="evidence" value="ECO:0007669"/>
    <property type="project" value="Ensembl"/>
</dbReference>
<dbReference type="GO" id="GO:1902074">
    <property type="term" value="P:response to salt"/>
    <property type="evidence" value="ECO:0007669"/>
    <property type="project" value="Ensembl"/>
</dbReference>
<dbReference type="GO" id="GO:0033574">
    <property type="term" value="P:response to testosterone"/>
    <property type="evidence" value="ECO:0007669"/>
    <property type="project" value="Ensembl"/>
</dbReference>
<dbReference type="GO" id="GO:0043179">
    <property type="term" value="P:rhythmic excitation"/>
    <property type="evidence" value="ECO:0000315"/>
    <property type="project" value="MGI"/>
</dbReference>
<dbReference type="GO" id="GO:1902287">
    <property type="term" value="P:semaphorin-plexin signaling pathway involved in axon guidance"/>
    <property type="evidence" value="ECO:0000315"/>
    <property type="project" value="MGI"/>
</dbReference>
<dbReference type="GO" id="GO:0023019">
    <property type="term" value="P:signal transduction involved in regulation of gene expression"/>
    <property type="evidence" value="ECO:0007669"/>
    <property type="project" value="Ensembl"/>
</dbReference>
<dbReference type="GO" id="GO:0001501">
    <property type="term" value="P:skeletal system development"/>
    <property type="evidence" value="ECO:0000315"/>
    <property type="project" value="MGI"/>
</dbReference>
<dbReference type="GO" id="GO:0006939">
    <property type="term" value="P:smooth muscle contraction"/>
    <property type="evidence" value="ECO:0000314"/>
    <property type="project" value="MGI"/>
</dbReference>
<dbReference type="GO" id="GO:0042554">
    <property type="term" value="P:superoxide anion generation"/>
    <property type="evidence" value="ECO:0007669"/>
    <property type="project" value="Ensembl"/>
</dbReference>
<dbReference type="GO" id="GO:0097492">
    <property type="term" value="P:sympathetic neuron axon guidance"/>
    <property type="evidence" value="ECO:0000315"/>
    <property type="project" value="MGI"/>
</dbReference>
<dbReference type="GO" id="GO:0030878">
    <property type="term" value="P:thyroid gland development"/>
    <property type="evidence" value="ECO:0000315"/>
    <property type="project" value="MGI"/>
</dbReference>
<dbReference type="GO" id="GO:0006366">
    <property type="term" value="P:transcription by RNA polymerase II"/>
    <property type="evidence" value="ECO:0000314"/>
    <property type="project" value="MGI"/>
</dbReference>
<dbReference type="GO" id="GO:0014826">
    <property type="term" value="P:vein smooth muscle contraction"/>
    <property type="evidence" value="ECO:0007669"/>
    <property type="project" value="Ensembl"/>
</dbReference>
<dbReference type="InterPro" id="IPR020475">
    <property type="entry name" value="Endothelin"/>
</dbReference>
<dbReference type="InterPro" id="IPR019764">
    <property type="entry name" value="Endothelin_toxin_CS"/>
</dbReference>
<dbReference type="InterPro" id="IPR001928">
    <property type="entry name" value="Endothln-like_toxin"/>
</dbReference>
<dbReference type="PANTHER" id="PTHR13874">
    <property type="entry name" value="ENDOTHELIN"/>
    <property type="match status" value="1"/>
</dbReference>
<dbReference type="PANTHER" id="PTHR13874:SF10">
    <property type="entry name" value="ENDOTHELIN-1"/>
    <property type="match status" value="1"/>
</dbReference>
<dbReference type="Pfam" id="PF00322">
    <property type="entry name" value="Endothelin"/>
    <property type="match status" value="1"/>
</dbReference>
<dbReference type="PRINTS" id="PR00365">
    <property type="entry name" value="ENDOTHELIN"/>
</dbReference>
<dbReference type="SMART" id="SM00272">
    <property type="entry name" value="END"/>
    <property type="match status" value="2"/>
</dbReference>
<dbReference type="PROSITE" id="PS00270">
    <property type="entry name" value="ENDOTHELIN"/>
    <property type="match status" value="2"/>
</dbReference>
<keyword id="KW-0165">Cleavage on pair of basic residues</keyword>
<keyword id="KW-0903">Direct protein sequencing</keyword>
<keyword id="KW-1015">Disulfide bond</keyword>
<keyword id="KW-1185">Reference proteome</keyword>
<keyword id="KW-0964">Secreted</keyword>
<keyword id="KW-0732">Signal</keyword>
<keyword id="KW-0838">Vasoactive</keyword>
<keyword id="KW-0839">Vasoconstrictor</keyword>
<sequence>MDYFPVIFSLLFVTFQGAPETAVLGAELSTGAENGVQSPPPSTPWRPRRSKRCSCSSLMDKECVYFCHLDIIWVNTPERVVPYGLGGSSRSKRSLKDLLPNKATDQAVRCQCAHQKDKKCWNFCQAGKELRAQSTMQKSLKDSKKGKPCSKLGKKCIYQQLVEGRKLRRLEAISNSIKASFRVAKLKAELYRDQKLTHNRAH</sequence>
<name>EDN1_MOUSE</name>
<feature type="signal peptide" evidence="4">
    <location>
        <begin position="1"/>
        <end position="25"/>
    </location>
</feature>
<feature type="propeptide" id="PRO_0000008062" evidence="3">
    <location>
        <begin position="26"/>
        <end position="50"/>
    </location>
</feature>
<feature type="peptide" id="PRO_0000436397" description="Big endothelin-1" evidence="3">
    <location>
        <begin position="53"/>
        <end position="91"/>
    </location>
</feature>
<feature type="peptide" id="PRO_0000008063" description="Endothelin-1">
    <location>
        <begin position="53"/>
        <end position="73"/>
    </location>
</feature>
<feature type="propeptide" id="PRO_0000008064">
    <location>
        <begin position="74"/>
        <end position="202"/>
    </location>
</feature>
<feature type="region of interest" description="Endothelin-like">
    <location>
        <begin position="110"/>
        <end position="124"/>
    </location>
</feature>
<feature type="site" description="Cleavage; by KEL" evidence="1">
    <location>
        <begin position="73"/>
        <end position="74"/>
    </location>
</feature>
<feature type="disulfide bond" evidence="1">
    <location>
        <begin position="53"/>
        <end position="67"/>
    </location>
</feature>
<feature type="disulfide bond" evidence="1">
    <location>
        <begin position="55"/>
        <end position="63"/>
    </location>
</feature>
<feature type="sequence conflict" description="In Ref. 3; BAA11109." evidence="9" ref="3">
    <original>N</original>
    <variation>K</variation>
    <location>
        <position position="75"/>
    </location>
</feature>
<feature type="sequence conflict" description="In Ref. 2; BAA07830." evidence="9" ref="2">
    <original>A</original>
    <variation>G</variation>
    <location>
        <position position="103"/>
    </location>
</feature>
<protein>
    <recommendedName>
        <fullName>Endothelin-1</fullName>
        <shortName>ET-1</shortName>
    </recommendedName>
    <alternativeName>
        <fullName>Preproendothelin-1</fullName>
        <shortName>PPET1</shortName>
    </alternativeName>
    <component>
        <recommendedName>
            <fullName>Big endothelin-1</fullName>
        </recommendedName>
    </component>
</protein>
<comment type="function">
    <text evidence="1 2 5 6 7">Endothelins are endothelium-derived vasoconstrictor peptides (By similarity). Probable ligand for G-protein coupled receptors EDNRA and EDNRB which activates PTK2B, BCAR1, BCAR3 and, GTPases RAP1 and RHOA cascade in glomerular mesangial cells (By similarity). Also binds the DEAR/FBXW7-AS1 receptor (PubMed:16293765). Promotes mesenteric arterial wall remodeling via activation of ROCK signaling and subsequent colocalization of NFATC3 with F-actin filaments (PubMed:20495147, PubMed:21525433). NFATC3 then translocates to the nucleus where it subsequently promotes the transcription of the smooth muscle hypertrophy and differentiation marker ACTA2 (PubMed:20495147).</text>
</comment>
<comment type="subcellular location">
    <subcellularLocation>
        <location>Secreted</location>
    </subcellularLocation>
</comment>
<comment type="tissue specificity">
    <text evidence="8">Highest expression in the adult is in lung. Lower levels found in heart, kidney, brain and intestine. In the embryo, expressed in outer and inner pharyngeal arch surfaces. Also expressed in endothelium of dorsal aorta and arch arteries, and in epithelium of pharyngeal pouches.</text>
</comment>
<comment type="developmental stage">
    <text evidence="8">Expression in lung is low at 17.5 dpc fetal mice and increases progressively into adulthood.</text>
</comment>
<comment type="induction">
    <text evidence="6 7">Induced by intermittent hypoxia in the lung (PubMed:20495147). Induced by chronic hypoxia in the intrapulmonary arteries (PubMed:21525433).</text>
</comment>
<comment type="similarity">
    <text evidence="9">Belongs to the endothelin/sarafotoxin family.</text>
</comment>
<gene>
    <name type="primary">Edn1</name>
</gene>
<organism>
    <name type="scientific">Mus musculus</name>
    <name type="common">Mouse</name>
    <dbReference type="NCBI Taxonomy" id="10090"/>
    <lineage>
        <taxon>Eukaryota</taxon>
        <taxon>Metazoa</taxon>
        <taxon>Chordata</taxon>
        <taxon>Craniata</taxon>
        <taxon>Vertebrata</taxon>
        <taxon>Euteleostomi</taxon>
        <taxon>Mammalia</taxon>
        <taxon>Eutheria</taxon>
        <taxon>Euarchontoglires</taxon>
        <taxon>Glires</taxon>
        <taxon>Rodentia</taxon>
        <taxon>Myomorpha</taxon>
        <taxon>Muroidea</taxon>
        <taxon>Muridae</taxon>
        <taxon>Murinae</taxon>
        <taxon>Mus</taxon>
        <taxon>Mus</taxon>
    </lineage>
</organism>
<reference key="1">
    <citation type="journal article" date="1995" name="Eur. J. Biochem.">
        <title>Mouse preproendothelin-1 gene. cDNA cloning, sequence analysis and determination of sites of expression during embryonic development.</title>
        <authorList>
            <person name="Chan T.S."/>
            <person name="Lin C.X."/>
            <person name="Chan W.Y."/>
            <person name="Chung S.S."/>
            <person name="Chung S.K."/>
        </authorList>
    </citation>
    <scope>NUCLEOTIDE SEQUENCE [MRNA]</scope>
    <source>
        <strain>C57BL/6 X CBA</strain>
        <tissue>Lung</tissue>
    </source>
</reference>
<reference key="2">
    <citation type="journal article" date="1996" name="Biochim. Biophys. Acta">
        <title>Sequence and neuronal expression of mouse endothelin-1 cDNA.</title>
        <authorList>
            <person name="Kurama M."/>
            <person name="Ishida N."/>
            <person name="Matsui M."/>
            <person name="Saida K."/>
            <person name="Mitsui Y."/>
        </authorList>
    </citation>
    <scope>NUCLEOTIDE SEQUENCE [MRNA]</scope>
    <source>
        <strain>BALB/cJ</strain>
        <tissue>Lung</tissue>
    </source>
</reference>
<reference key="3">
    <citation type="journal article" date="1996" name="Genomics">
        <title>Sequence analysis, chromosomal location, and developmental expression of the mouse preproendothelin-1 gene.</title>
        <authorList>
            <person name="Maemura K."/>
            <person name="Kurihara H."/>
            <person name="Kurihara Y."/>
            <person name="Oda H."/>
            <person name="Ishikawa T."/>
            <person name="Copeland N.G."/>
            <person name="Gilbert D.J."/>
            <person name="Jenkins N.A."/>
            <person name="Yazaki Y."/>
        </authorList>
    </citation>
    <scope>NUCLEOTIDE SEQUENCE [GENOMIC DNA]</scope>
    <scope>TISSUE SPECIFICITY</scope>
    <scope>DEVELOPMENTAL STAGE</scope>
    <source>
        <strain>BALB/cJ</strain>
        <tissue>Liver</tissue>
    </source>
</reference>
<reference key="4">
    <citation type="journal article" date="2004" name="Genome Res.">
        <title>The status, quality, and expansion of the NIH full-length cDNA project: the Mammalian Gene Collection (MGC).</title>
        <authorList>
            <consortium name="The MGC Project Team"/>
        </authorList>
    </citation>
    <scope>NUCLEOTIDE SEQUENCE [LARGE SCALE MRNA]</scope>
    <source>
        <strain>FVB/N-3</strain>
        <tissue>Mammary gland</tissue>
    </source>
</reference>
<reference key="5">
    <citation type="journal article" date="1995" name="J. Clin. Invest.">
        <title>Targeting gene expression to the vascular wall in transgenic mice using the murine preproendothelin-1 promoter.</title>
        <authorList>
            <person name="Harats D."/>
            <person name="Kurihara H."/>
            <person name="Belloni P."/>
            <person name="Oakley H."/>
            <person name="Ziober A."/>
            <person name="Ackley D."/>
            <person name="Cain G."/>
            <person name="Kurihara Y."/>
            <person name="Lawn R."/>
            <person name="Sigal E."/>
        </authorList>
    </citation>
    <scope>NUCLEOTIDE SEQUENCE [GENOMIC DNA] OF 1-21</scope>
    <source>
        <strain>BALB/cJ</strain>
    </source>
</reference>
<reference key="6">
    <citation type="journal article" date="1993" name="Am. J. Physiol.">
        <title>Endothelin-1 mRNA in glomerular and epithelial cells of kidney.</title>
        <authorList>
            <person name="Chen M."/>
            <person name="Todd-Turla K."/>
            <person name="Wang W.H."/>
            <person name="Cao X."/>
            <person name="Smart A."/>
            <person name="Brosius F.C."/>
            <person name="Killen P.D."/>
            <person name="Keiser J.A."/>
            <person name="Briggs J.P."/>
            <person name="Schnermann J."/>
        </authorList>
    </citation>
    <scope>NUCLEOTIDE SEQUENCE [MRNA] OF 36-76</scope>
    <source>
        <tissue>Kidney</tissue>
    </source>
</reference>
<reference key="7">
    <citation type="journal article" date="1989" name="J. Biol. Chem.">
        <title>A novel peptide, vasoactive intestinal contractor, of a new (endothelin) peptide family. Molecular cloning, expression, and biological activity.</title>
        <authorList>
            <person name="Saida K."/>
            <person name="Mitsui Y."/>
            <person name="Ishida N."/>
        </authorList>
    </citation>
    <scope>NUCLEOTIDE SEQUENCE [GENOMIC DNA] OF 48-77</scope>
</reference>
<reference key="8">
    <citation type="submission" date="2009-01" db="UniProtKB">
        <authorList>
            <person name="Lubec G."/>
            <person name="Sunyer B."/>
            <person name="Chen W.-Q."/>
        </authorList>
    </citation>
    <scope>PROTEIN SEQUENCE OF 155-165</scope>
    <scope>IDENTIFICATION BY MASS SPECTROMETRY</scope>
    <source>
        <strain>OF1</strain>
        <tissue>Hippocampus</tissue>
    </source>
</reference>
<reference key="9">
    <citation type="journal article" date="2005" name="Physiol. Genomics">
        <title>Embryonic lethality in Dear gene-deficient mice: new player in angiogenesis.</title>
        <authorList>
            <person name="Herrera V.L."/>
            <person name="Ponce L.R."/>
            <person name="Bagamasbad P.D."/>
            <person name="VanPelt B.D."/>
            <person name="Didishvili T."/>
            <person name="Ruiz-Opazo N."/>
        </authorList>
    </citation>
    <scope>FUNCTION</scope>
</reference>
<reference key="10">
    <citation type="journal article" date="2010" name="Am. J. Physiol.">
        <title>NFATc3 contributes to intermittent hypoxia-induced arterial remodeling in mice.</title>
        <authorList>
            <person name="de Frutos S."/>
            <person name="Caldwell E."/>
            <person name="Nitta C.H."/>
            <person name="Kanagy N.L."/>
            <person name="Wang J."/>
            <person name="Wang W."/>
            <person name="Walker M.K."/>
            <person name="Gonzalez Bosc L.V."/>
        </authorList>
    </citation>
    <scope>FUNCTION</scope>
    <scope>INDUCTION BY HYPOXIA</scope>
</reference>
<reference key="11">
    <citation type="journal article" date="2011" name="Am. J. Physiol.">
        <title>Endothelin-1 contributes to increased NFATc3 activation by chronic hypoxia in pulmonary arteries.</title>
        <authorList>
            <person name="de Frutos S."/>
            <person name="Diaz J.M."/>
            <person name="Nitta C.H."/>
            <person name="Sherpa M.L."/>
            <person name="Bosc L.V."/>
        </authorList>
    </citation>
    <scope>FUNCTION</scope>
    <scope>INDUCTION BY HYPOXIA</scope>
</reference>
<proteinExistence type="evidence at protein level"/>